<sequence length="427" mass="46096">MESLTLQPIARVDGTINLPGSKSVSNRALLLAALAHGKTVLTNLLDSDDVRHMLNALTALGVSYTLSADRTRCEIIGNGGPLHAEGALELFLGNAGTAMRPLAAALCLGSNDIVLTGEPRMKERPIGHLVDALRLGGAKITYLEQENYPPLRLQGGFTGGNVDVDGSVSSQFLTALLMTAPLAPEDTVIRIKGDLVSKPYIDITLNLMKTFGVEIENQHYQQFVVKGGQSYQSPGTYLVEGDASSASYFLAAAAIKGGTVKVTGIGRNSMQGDIRFADVLEKMGATICWGDDYISCTRGELNAIDMDMNHIPDAAMTIATAALFAKGTTTLRNIYNWRVKETDRLFAMATELRKVGAEVEEGHDYIRITPPEKLNFAEIATYNDHRMAMCFSLVALSDTPVTILDPKCTAKTFPDYFEQLARISQAA</sequence>
<name>AROA_ECOBW</name>
<protein>
    <recommendedName>
        <fullName evidence="1">3-phosphoshikimate 1-carboxyvinyltransferase</fullName>
        <ecNumber evidence="1">2.5.1.19</ecNumber>
    </recommendedName>
    <alternativeName>
        <fullName evidence="1">5-enolpyruvylshikimate-3-phosphate synthase</fullName>
        <shortName evidence="1">EPSP synthase</shortName>
        <shortName evidence="1">EPSPS</shortName>
    </alternativeName>
</protein>
<accession>C4ZQ34</accession>
<reference key="1">
    <citation type="journal article" date="2009" name="J. Bacteriol.">
        <title>Genomic sequencing reveals regulatory mutations and recombinational events in the widely used MC4100 lineage of Escherichia coli K-12.</title>
        <authorList>
            <person name="Ferenci T."/>
            <person name="Zhou Z."/>
            <person name="Betteridge T."/>
            <person name="Ren Y."/>
            <person name="Liu Y."/>
            <person name="Feng L."/>
            <person name="Reeves P.R."/>
            <person name="Wang L."/>
        </authorList>
    </citation>
    <scope>NUCLEOTIDE SEQUENCE [LARGE SCALE GENOMIC DNA]</scope>
    <source>
        <strain>K12 / MC4100 / BW2952</strain>
    </source>
</reference>
<dbReference type="EC" id="2.5.1.19" evidence="1"/>
<dbReference type="EMBL" id="CP001396">
    <property type="protein sequence ID" value="ACR61879.1"/>
    <property type="molecule type" value="Genomic_DNA"/>
</dbReference>
<dbReference type="RefSeq" id="WP_000445231.1">
    <property type="nucleotide sequence ID" value="NC_012759.1"/>
</dbReference>
<dbReference type="SMR" id="C4ZQ34"/>
<dbReference type="GeneID" id="93776510"/>
<dbReference type="KEGG" id="ebw:BWG_0760"/>
<dbReference type="HOGENOM" id="CLU_024321_0_0_6"/>
<dbReference type="UniPathway" id="UPA00053">
    <property type="reaction ID" value="UER00089"/>
</dbReference>
<dbReference type="GO" id="GO:0005737">
    <property type="term" value="C:cytoplasm"/>
    <property type="evidence" value="ECO:0007669"/>
    <property type="project" value="UniProtKB-SubCell"/>
</dbReference>
<dbReference type="GO" id="GO:0003866">
    <property type="term" value="F:3-phosphoshikimate 1-carboxyvinyltransferase activity"/>
    <property type="evidence" value="ECO:0007669"/>
    <property type="project" value="UniProtKB-UniRule"/>
</dbReference>
<dbReference type="GO" id="GO:0008652">
    <property type="term" value="P:amino acid biosynthetic process"/>
    <property type="evidence" value="ECO:0007669"/>
    <property type="project" value="UniProtKB-KW"/>
</dbReference>
<dbReference type="GO" id="GO:0009073">
    <property type="term" value="P:aromatic amino acid family biosynthetic process"/>
    <property type="evidence" value="ECO:0007669"/>
    <property type="project" value="UniProtKB-KW"/>
</dbReference>
<dbReference type="GO" id="GO:0009423">
    <property type="term" value="P:chorismate biosynthetic process"/>
    <property type="evidence" value="ECO:0007669"/>
    <property type="project" value="UniProtKB-UniRule"/>
</dbReference>
<dbReference type="CDD" id="cd01554">
    <property type="entry name" value="EPT-like"/>
    <property type="match status" value="1"/>
</dbReference>
<dbReference type="FunFam" id="3.65.10.10:FF:000003">
    <property type="entry name" value="3-phosphoshikimate 1-carboxyvinyltransferase"/>
    <property type="match status" value="1"/>
</dbReference>
<dbReference type="FunFam" id="3.65.10.10:FF:000004">
    <property type="entry name" value="3-phosphoshikimate 1-carboxyvinyltransferase"/>
    <property type="match status" value="1"/>
</dbReference>
<dbReference type="Gene3D" id="3.65.10.10">
    <property type="entry name" value="Enolpyruvate transferase domain"/>
    <property type="match status" value="2"/>
</dbReference>
<dbReference type="HAMAP" id="MF_00210">
    <property type="entry name" value="EPSP_synth"/>
    <property type="match status" value="1"/>
</dbReference>
<dbReference type="InterPro" id="IPR001986">
    <property type="entry name" value="Enolpyruvate_Tfrase_dom"/>
</dbReference>
<dbReference type="InterPro" id="IPR036968">
    <property type="entry name" value="Enolpyruvate_Tfrase_sf"/>
</dbReference>
<dbReference type="InterPro" id="IPR006264">
    <property type="entry name" value="EPSP_synthase"/>
</dbReference>
<dbReference type="InterPro" id="IPR023193">
    <property type="entry name" value="EPSP_synthase_CS"/>
</dbReference>
<dbReference type="InterPro" id="IPR013792">
    <property type="entry name" value="RNA3'P_cycl/enolpyr_Trfase_a/b"/>
</dbReference>
<dbReference type="NCBIfam" id="TIGR01356">
    <property type="entry name" value="aroA"/>
    <property type="match status" value="1"/>
</dbReference>
<dbReference type="PANTHER" id="PTHR21090">
    <property type="entry name" value="AROM/DEHYDROQUINATE SYNTHASE"/>
    <property type="match status" value="1"/>
</dbReference>
<dbReference type="PANTHER" id="PTHR21090:SF5">
    <property type="entry name" value="PENTAFUNCTIONAL AROM POLYPEPTIDE"/>
    <property type="match status" value="1"/>
</dbReference>
<dbReference type="Pfam" id="PF00275">
    <property type="entry name" value="EPSP_synthase"/>
    <property type="match status" value="1"/>
</dbReference>
<dbReference type="PIRSF" id="PIRSF000505">
    <property type="entry name" value="EPSPS"/>
    <property type="match status" value="1"/>
</dbReference>
<dbReference type="SUPFAM" id="SSF55205">
    <property type="entry name" value="EPT/RTPC-like"/>
    <property type="match status" value="1"/>
</dbReference>
<dbReference type="PROSITE" id="PS00104">
    <property type="entry name" value="EPSP_SYNTHASE_1"/>
    <property type="match status" value="1"/>
</dbReference>
<dbReference type="PROSITE" id="PS00885">
    <property type="entry name" value="EPSP_SYNTHASE_2"/>
    <property type="match status" value="1"/>
</dbReference>
<evidence type="ECO:0000255" key="1">
    <source>
        <dbReference type="HAMAP-Rule" id="MF_00210"/>
    </source>
</evidence>
<comment type="function">
    <text evidence="1">Catalyzes the transfer of the enolpyruvyl moiety of phosphoenolpyruvate (PEP) to the 5-hydroxyl of shikimate-3-phosphate (S3P) to produce enolpyruvyl shikimate-3-phosphate and inorganic phosphate.</text>
</comment>
<comment type="catalytic activity">
    <reaction evidence="1">
        <text>3-phosphoshikimate + phosphoenolpyruvate = 5-O-(1-carboxyvinyl)-3-phosphoshikimate + phosphate</text>
        <dbReference type="Rhea" id="RHEA:21256"/>
        <dbReference type="ChEBI" id="CHEBI:43474"/>
        <dbReference type="ChEBI" id="CHEBI:57701"/>
        <dbReference type="ChEBI" id="CHEBI:58702"/>
        <dbReference type="ChEBI" id="CHEBI:145989"/>
        <dbReference type="EC" id="2.5.1.19"/>
    </reaction>
    <physiologicalReaction direction="left-to-right" evidence="1">
        <dbReference type="Rhea" id="RHEA:21257"/>
    </physiologicalReaction>
</comment>
<comment type="pathway">
    <text evidence="1">Metabolic intermediate biosynthesis; chorismate biosynthesis; chorismate from D-erythrose 4-phosphate and phosphoenolpyruvate: step 6/7.</text>
</comment>
<comment type="subunit">
    <text evidence="1">Monomer.</text>
</comment>
<comment type="subcellular location">
    <subcellularLocation>
        <location evidence="1">Cytoplasm</location>
    </subcellularLocation>
</comment>
<comment type="similarity">
    <text evidence="1">Belongs to the EPSP synthase family.</text>
</comment>
<gene>
    <name evidence="1" type="primary">aroA</name>
    <name type="ordered locus">BWG_0760</name>
</gene>
<keyword id="KW-0028">Amino-acid biosynthesis</keyword>
<keyword id="KW-0057">Aromatic amino acid biosynthesis</keyword>
<keyword id="KW-0963">Cytoplasm</keyword>
<keyword id="KW-0808">Transferase</keyword>
<organism>
    <name type="scientific">Escherichia coli (strain K12 / MC4100 / BW2952)</name>
    <dbReference type="NCBI Taxonomy" id="595496"/>
    <lineage>
        <taxon>Bacteria</taxon>
        <taxon>Pseudomonadati</taxon>
        <taxon>Pseudomonadota</taxon>
        <taxon>Gammaproteobacteria</taxon>
        <taxon>Enterobacterales</taxon>
        <taxon>Enterobacteriaceae</taxon>
        <taxon>Escherichia</taxon>
    </lineage>
</organism>
<feature type="chain" id="PRO_1000204163" description="3-phosphoshikimate 1-carboxyvinyltransferase">
    <location>
        <begin position="1"/>
        <end position="427"/>
    </location>
</feature>
<feature type="active site" description="Proton acceptor" evidence="1">
    <location>
        <position position="313"/>
    </location>
</feature>
<feature type="binding site" evidence="1">
    <location>
        <position position="22"/>
    </location>
    <ligand>
        <name>3-phosphoshikimate</name>
        <dbReference type="ChEBI" id="CHEBI:145989"/>
    </ligand>
</feature>
<feature type="binding site" evidence="1">
    <location>
        <position position="22"/>
    </location>
    <ligand>
        <name>phosphoenolpyruvate</name>
        <dbReference type="ChEBI" id="CHEBI:58702"/>
    </ligand>
</feature>
<feature type="binding site" evidence="1">
    <location>
        <position position="23"/>
    </location>
    <ligand>
        <name>3-phosphoshikimate</name>
        <dbReference type="ChEBI" id="CHEBI:145989"/>
    </ligand>
</feature>
<feature type="binding site" evidence="1">
    <location>
        <position position="27"/>
    </location>
    <ligand>
        <name>3-phosphoshikimate</name>
        <dbReference type="ChEBI" id="CHEBI:145989"/>
    </ligand>
</feature>
<feature type="binding site" evidence="1">
    <location>
        <position position="96"/>
    </location>
    <ligand>
        <name>phosphoenolpyruvate</name>
        <dbReference type="ChEBI" id="CHEBI:58702"/>
    </ligand>
</feature>
<feature type="binding site" evidence="1">
    <location>
        <position position="124"/>
    </location>
    <ligand>
        <name>phosphoenolpyruvate</name>
        <dbReference type="ChEBI" id="CHEBI:58702"/>
    </ligand>
</feature>
<feature type="binding site" evidence="1">
    <location>
        <position position="169"/>
    </location>
    <ligand>
        <name>3-phosphoshikimate</name>
        <dbReference type="ChEBI" id="CHEBI:145989"/>
    </ligand>
</feature>
<feature type="binding site" evidence="1">
    <location>
        <position position="170"/>
    </location>
    <ligand>
        <name>3-phosphoshikimate</name>
        <dbReference type="ChEBI" id="CHEBI:145989"/>
    </ligand>
</feature>
<feature type="binding site" evidence="1">
    <location>
        <position position="171"/>
    </location>
    <ligand>
        <name>3-phosphoshikimate</name>
        <dbReference type="ChEBI" id="CHEBI:145989"/>
    </ligand>
</feature>
<feature type="binding site" evidence="1">
    <location>
        <position position="171"/>
    </location>
    <ligand>
        <name>phosphoenolpyruvate</name>
        <dbReference type="ChEBI" id="CHEBI:58702"/>
    </ligand>
</feature>
<feature type="binding site" evidence="1">
    <location>
        <position position="197"/>
    </location>
    <ligand>
        <name>3-phosphoshikimate</name>
        <dbReference type="ChEBI" id="CHEBI:145989"/>
    </ligand>
</feature>
<feature type="binding site" evidence="1">
    <location>
        <position position="313"/>
    </location>
    <ligand>
        <name>3-phosphoshikimate</name>
        <dbReference type="ChEBI" id="CHEBI:145989"/>
    </ligand>
</feature>
<feature type="binding site" evidence="1">
    <location>
        <position position="336"/>
    </location>
    <ligand>
        <name>3-phosphoshikimate</name>
        <dbReference type="ChEBI" id="CHEBI:145989"/>
    </ligand>
</feature>
<feature type="binding site" evidence="1">
    <location>
        <position position="340"/>
    </location>
    <ligand>
        <name>3-phosphoshikimate</name>
        <dbReference type="ChEBI" id="CHEBI:145989"/>
    </ligand>
</feature>
<feature type="binding site" evidence="1">
    <location>
        <position position="344"/>
    </location>
    <ligand>
        <name>phosphoenolpyruvate</name>
        <dbReference type="ChEBI" id="CHEBI:58702"/>
    </ligand>
</feature>
<feature type="binding site" evidence="1">
    <location>
        <position position="386"/>
    </location>
    <ligand>
        <name>phosphoenolpyruvate</name>
        <dbReference type="ChEBI" id="CHEBI:58702"/>
    </ligand>
</feature>
<feature type="binding site" evidence="1">
    <location>
        <position position="411"/>
    </location>
    <ligand>
        <name>phosphoenolpyruvate</name>
        <dbReference type="ChEBI" id="CHEBI:58702"/>
    </ligand>
</feature>
<proteinExistence type="inferred from homology"/>